<accession>Q6RI45</accession>
<accession>C9IZ39</accession>
<accession>C9J3F3</accession>
<accession>Q2T9J6</accession>
<accession>Q5JRN1</accession>
<accession>Q6RI37</accession>
<accession>Q6RI42</accession>
<accession>Q6RI44</accession>
<accession>Q8N916</accession>
<dbReference type="EMBL" id="AY497046">
    <property type="protein sequence ID" value="AAS45471.1"/>
    <property type="molecule type" value="mRNA"/>
</dbReference>
<dbReference type="EMBL" id="AY497047">
    <property type="protein sequence ID" value="AAS45472.1"/>
    <property type="molecule type" value="mRNA"/>
</dbReference>
<dbReference type="EMBL" id="AY497048">
    <property type="protein sequence ID" value="AAS45473.1"/>
    <property type="molecule type" value="mRNA"/>
</dbReference>
<dbReference type="EMBL" id="AY497049">
    <property type="protein sequence ID" value="AAS45474.1"/>
    <property type="molecule type" value="mRNA"/>
</dbReference>
<dbReference type="EMBL" id="AY497050">
    <property type="protein sequence ID" value="AAS45475.1"/>
    <property type="molecule type" value="mRNA"/>
</dbReference>
<dbReference type="EMBL" id="AY497051">
    <property type="protein sequence ID" value="AAS45476.1"/>
    <property type="molecule type" value="mRNA"/>
</dbReference>
<dbReference type="EMBL" id="AY497052">
    <property type="protein sequence ID" value="AAS45477.1"/>
    <property type="molecule type" value="mRNA"/>
</dbReference>
<dbReference type="EMBL" id="AY497053">
    <property type="protein sequence ID" value="AAS45478.1"/>
    <property type="molecule type" value="mRNA"/>
</dbReference>
<dbReference type="EMBL" id="AY497054">
    <property type="protein sequence ID" value="AAS45479.1"/>
    <property type="molecule type" value="mRNA"/>
</dbReference>
<dbReference type="EMBL" id="AY497055">
    <property type="protein sequence ID" value="AAS45480.1"/>
    <property type="molecule type" value="mRNA"/>
</dbReference>
<dbReference type="EMBL" id="AY497056">
    <property type="protein sequence ID" value="AAS45481.1"/>
    <property type="molecule type" value="mRNA"/>
</dbReference>
<dbReference type="EMBL" id="AY497057">
    <property type="protein sequence ID" value="AAS45482.1"/>
    <property type="molecule type" value="mRNA"/>
</dbReference>
<dbReference type="EMBL" id="AY497058">
    <property type="protein sequence ID" value="AAS45483.1"/>
    <property type="molecule type" value="mRNA"/>
</dbReference>
<dbReference type="EMBL" id="AY497059">
    <property type="protein sequence ID" value="AAS45484.1"/>
    <property type="molecule type" value="mRNA"/>
</dbReference>
<dbReference type="EMBL" id="AY497060">
    <property type="protein sequence ID" value="AAS45485.1"/>
    <property type="molecule type" value="mRNA"/>
</dbReference>
<dbReference type="EMBL" id="AL512504">
    <property type="status" value="NOT_ANNOTATED_CDS"/>
    <property type="molecule type" value="Genomic_DNA"/>
</dbReference>
<dbReference type="EMBL" id="AL590031">
    <property type="status" value="NOT_ANNOTATED_CDS"/>
    <property type="molecule type" value="Genomic_DNA"/>
</dbReference>
<dbReference type="EMBL" id="AL669934">
    <property type="status" value="NOT_ANNOTATED_CDS"/>
    <property type="molecule type" value="Genomic_DNA"/>
</dbReference>
<dbReference type="EMBL" id="BC111490">
    <property type="protein sequence ID" value="AAI11491.1"/>
    <property type="molecule type" value="mRNA"/>
</dbReference>
<dbReference type="EMBL" id="AK095887">
    <property type="protein sequence ID" value="BAC04641.1"/>
    <property type="status" value="ALT_INIT"/>
    <property type="molecule type" value="mRNA"/>
</dbReference>
<dbReference type="CCDS" id="CCDS14447.1">
    <molecule id="Q6RI45-1"/>
</dbReference>
<dbReference type="RefSeq" id="NP_694984.4">
    <molecule id="Q6RI45-1"/>
    <property type="nucleotide sequence ID" value="NM_153252.4"/>
</dbReference>
<dbReference type="RefSeq" id="XP_016884873.1">
    <molecule id="Q6RI45-3"/>
    <property type="nucleotide sequence ID" value="XM_017029384.2"/>
</dbReference>
<dbReference type="RefSeq" id="XP_047297913.1">
    <molecule id="Q6RI45-5"/>
    <property type="nucleotide sequence ID" value="XM_047441957.1"/>
</dbReference>
<dbReference type="SMR" id="Q6RI45"/>
<dbReference type="BioGRID" id="129012">
    <property type="interactions" value="46"/>
</dbReference>
<dbReference type="FunCoup" id="Q6RI45">
    <property type="interactions" value="2465"/>
</dbReference>
<dbReference type="IntAct" id="Q6RI45">
    <property type="interactions" value="11"/>
</dbReference>
<dbReference type="STRING" id="9606.ENSP00000362372"/>
<dbReference type="ChEMBL" id="CHEMBL3769296"/>
<dbReference type="GlyGen" id="Q6RI45">
    <property type="glycosylation" value="2 sites, 1 N-linked glycan (1 site), 1 O-linked glycan (1 site)"/>
</dbReference>
<dbReference type="iPTMnet" id="Q6RI45"/>
<dbReference type="PhosphoSitePlus" id="Q6RI45"/>
<dbReference type="BioMuta" id="BRWD3"/>
<dbReference type="DMDM" id="313104082"/>
<dbReference type="jPOST" id="Q6RI45"/>
<dbReference type="MassIVE" id="Q6RI45"/>
<dbReference type="PaxDb" id="9606-ENSP00000362372"/>
<dbReference type="PeptideAtlas" id="Q6RI45"/>
<dbReference type="ProteomicsDB" id="67319">
    <molecule id="Q6RI45-1"/>
</dbReference>
<dbReference type="ProteomicsDB" id="67320">
    <molecule id="Q6RI45-2"/>
</dbReference>
<dbReference type="ProteomicsDB" id="67321">
    <molecule id="Q6RI45-3"/>
</dbReference>
<dbReference type="ProteomicsDB" id="67322">
    <molecule id="Q6RI45-4"/>
</dbReference>
<dbReference type="ProteomicsDB" id="67323">
    <molecule id="Q6RI45-5"/>
</dbReference>
<dbReference type="Pumba" id="Q6RI45"/>
<dbReference type="Antibodypedia" id="537">
    <property type="antibodies" value="51 antibodies from 16 providers"/>
</dbReference>
<dbReference type="DNASU" id="254065"/>
<dbReference type="Ensembl" id="ENST00000373275.5">
    <molecule id="Q6RI45-1"/>
    <property type="protein sequence ID" value="ENSP00000362372.4"/>
    <property type="gene ID" value="ENSG00000165288.11"/>
</dbReference>
<dbReference type="GeneID" id="254065"/>
<dbReference type="KEGG" id="hsa:254065"/>
<dbReference type="MANE-Select" id="ENST00000373275.5">
    <property type="protein sequence ID" value="ENSP00000362372.4"/>
    <property type="RefSeq nucleotide sequence ID" value="NM_153252.5"/>
    <property type="RefSeq protein sequence ID" value="NP_694984.5"/>
</dbReference>
<dbReference type="UCSC" id="uc004edt.4">
    <molecule id="Q6RI45-1"/>
    <property type="organism name" value="human"/>
</dbReference>
<dbReference type="AGR" id="HGNC:17342"/>
<dbReference type="CTD" id="254065"/>
<dbReference type="DisGeNET" id="254065"/>
<dbReference type="GeneCards" id="BRWD3"/>
<dbReference type="HGNC" id="HGNC:17342">
    <property type="gene designation" value="BRWD3"/>
</dbReference>
<dbReference type="HPA" id="ENSG00000165288">
    <property type="expression patterns" value="Low tissue specificity"/>
</dbReference>
<dbReference type="MalaCards" id="BRWD3"/>
<dbReference type="MIM" id="300553">
    <property type="type" value="gene"/>
</dbReference>
<dbReference type="MIM" id="300659">
    <property type="type" value="phenotype"/>
</dbReference>
<dbReference type="neXtProt" id="NX_Q6RI45"/>
<dbReference type="OpenTargets" id="ENSG00000165288"/>
<dbReference type="Orphanet" id="528084">
    <property type="disease" value="Non-specific syndromic intellectual disability"/>
</dbReference>
<dbReference type="PharmGKB" id="PA134900775"/>
<dbReference type="VEuPathDB" id="HostDB:ENSG00000165288"/>
<dbReference type="eggNOG" id="KOG0644">
    <property type="taxonomic scope" value="Eukaryota"/>
</dbReference>
<dbReference type="GeneTree" id="ENSGT00950000183107"/>
<dbReference type="HOGENOM" id="CLU_001108_0_0_1"/>
<dbReference type="InParanoid" id="Q6RI45"/>
<dbReference type="OMA" id="TVVTSWK"/>
<dbReference type="OrthoDB" id="538223at2759"/>
<dbReference type="PAN-GO" id="Q6RI45">
    <property type="GO annotations" value="4 GO annotations based on evolutionary models"/>
</dbReference>
<dbReference type="PhylomeDB" id="Q6RI45"/>
<dbReference type="TreeFam" id="TF324197"/>
<dbReference type="PathwayCommons" id="Q6RI45"/>
<dbReference type="SignaLink" id="Q6RI45"/>
<dbReference type="BioGRID-ORCS" id="254065">
    <property type="hits" value="14 hits in 795 CRISPR screens"/>
</dbReference>
<dbReference type="ChiTaRS" id="BRWD3">
    <property type="organism name" value="human"/>
</dbReference>
<dbReference type="GeneWiki" id="BRWD3"/>
<dbReference type="GenomeRNAi" id="254065"/>
<dbReference type="Pharos" id="Q6RI45">
    <property type="development level" value="Tbio"/>
</dbReference>
<dbReference type="PRO" id="PR:Q6RI45"/>
<dbReference type="Proteomes" id="UP000005640">
    <property type="component" value="Chromosome X"/>
</dbReference>
<dbReference type="RNAct" id="Q6RI45">
    <property type="molecule type" value="protein"/>
</dbReference>
<dbReference type="Bgee" id="ENSG00000165288">
    <property type="expression patterns" value="Expressed in tendon of biceps brachii and 171 other cell types or tissues"/>
</dbReference>
<dbReference type="GO" id="GO:0005634">
    <property type="term" value="C:nucleus"/>
    <property type="evidence" value="ECO:0000318"/>
    <property type="project" value="GO_Central"/>
</dbReference>
<dbReference type="GO" id="GO:0007010">
    <property type="term" value="P:cytoskeleton organization"/>
    <property type="evidence" value="ECO:0000315"/>
    <property type="project" value="UniProtKB"/>
</dbReference>
<dbReference type="GO" id="GO:0008360">
    <property type="term" value="P:regulation of cell shape"/>
    <property type="evidence" value="ECO:0000315"/>
    <property type="project" value="UniProtKB"/>
</dbReference>
<dbReference type="GO" id="GO:0006357">
    <property type="term" value="P:regulation of transcription by RNA polymerase II"/>
    <property type="evidence" value="ECO:0000318"/>
    <property type="project" value="GO_Central"/>
</dbReference>
<dbReference type="CDD" id="cd05529">
    <property type="entry name" value="Bromo_WDR9_I_like"/>
    <property type="match status" value="1"/>
</dbReference>
<dbReference type="CDD" id="cd00200">
    <property type="entry name" value="WD40"/>
    <property type="match status" value="1"/>
</dbReference>
<dbReference type="FunFam" id="2.130.10.10:FF:000071">
    <property type="entry name" value="Bromodomain and WD repeat domain containing 1"/>
    <property type="match status" value="1"/>
</dbReference>
<dbReference type="FunFam" id="1.20.920.10:FF:000008">
    <property type="entry name" value="Bromodomain and WD repeat domain containing 3"/>
    <property type="match status" value="1"/>
</dbReference>
<dbReference type="FunFam" id="1.20.920.10:FF:000034">
    <property type="entry name" value="Bromodomain and WD repeat domain containing 3"/>
    <property type="match status" value="1"/>
</dbReference>
<dbReference type="FunFam" id="2.130.10.10:FF:000222">
    <property type="entry name" value="Bromodomain and WD repeat domain containing 3"/>
    <property type="match status" value="1"/>
</dbReference>
<dbReference type="FunFam" id="2.130.10.10:FF:000328">
    <property type="entry name" value="Bromodomain and WD repeat domain containing 3"/>
    <property type="match status" value="1"/>
</dbReference>
<dbReference type="Gene3D" id="1.20.920.10">
    <property type="entry name" value="Bromodomain-like"/>
    <property type="match status" value="2"/>
</dbReference>
<dbReference type="Gene3D" id="2.130.10.10">
    <property type="entry name" value="YVTN repeat-like/Quinoprotein amine dehydrogenase"/>
    <property type="match status" value="3"/>
</dbReference>
<dbReference type="InterPro" id="IPR052060">
    <property type="entry name" value="Bromo_WD_repeat"/>
</dbReference>
<dbReference type="InterPro" id="IPR001487">
    <property type="entry name" value="Bromodomain"/>
</dbReference>
<dbReference type="InterPro" id="IPR036427">
    <property type="entry name" value="Bromodomain-like_sf"/>
</dbReference>
<dbReference type="InterPro" id="IPR015943">
    <property type="entry name" value="WD40/YVTN_repeat-like_dom_sf"/>
</dbReference>
<dbReference type="InterPro" id="IPR019775">
    <property type="entry name" value="WD40_repeat_CS"/>
</dbReference>
<dbReference type="InterPro" id="IPR036322">
    <property type="entry name" value="WD40_repeat_dom_sf"/>
</dbReference>
<dbReference type="InterPro" id="IPR001680">
    <property type="entry name" value="WD40_rpt"/>
</dbReference>
<dbReference type="PANTHER" id="PTHR16266:SF25">
    <property type="entry name" value="BROMODOMAIN AND WD REPEAT-CONTAINING PROTEIN 3"/>
    <property type="match status" value="1"/>
</dbReference>
<dbReference type="PANTHER" id="PTHR16266">
    <property type="entry name" value="WD REPEAT DOMAIN 9"/>
    <property type="match status" value="1"/>
</dbReference>
<dbReference type="Pfam" id="PF00439">
    <property type="entry name" value="Bromodomain"/>
    <property type="match status" value="2"/>
</dbReference>
<dbReference type="Pfam" id="PF25437">
    <property type="entry name" value="BRWD1_N"/>
    <property type="match status" value="1"/>
</dbReference>
<dbReference type="Pfam" id="PF25313">
    <property type="entry name" value="BRWD_AD"/>
    <property type="match status" value="1"/>
</dbReference>
<dbReference type="Pfam" id="PF00400">
    <property type="entry name" value="WD40"/>
    <property type="match status" value="7"/>
</dbReference>
<dbReference type="PRINTS" id="PR00503">
    <property type="entry name" value="BROMODOMAIN"/>
</dbReference>
<dbReference type="SMART" id="SM00297">
    <property type="entry name" value="BROMO"/>
    <property type="match status" value="2"/>
</dbReference>
<dbReference type="SMART" id="SM00320">
    <property type="entry name" value="WD40"/>
    <property type="match status" value="8"/>
</dbReference>
<dbReference type="SUPFAM" id="SSF47370">
    <property type="entry name" value="Bromodomain"/>
    <property type="match status" value="2"/>
</dbReference>
<dbReference type="SUPFAM" id="SSF50978">
    <property type="entry name" value="WD40 repeat-like"/>
    <property type="match status" value="1"/>
</dbReference>
<dbReference type="PROSITE" id="PS50014">
    <property type="entry name" value="BROMODOMAIN_2"/>
    <property type="match status" value="2"/>
</dbReference>
<dbReference type="PROSITE" id="PS00678">
    <property type="entry name" value="WD_REPEATS_1"/>
    <property type="match status" value="2"/>
</dbReference>
<dbReference type="PROSITE" id="PS50082">
    <property type="entry name" value="WD_REPEATS_2"/>
    <property type="match status" value="5"/>
</dbReference>
<dbReference type="PROSITE" id="PS50294">
    <property type="entry name" value="WD_REPEATS_REGION"/>
    <property type="match status" value="1"/>
</dbReference>
<feature type="chain" id="PRO_0000283089" description="Bromodomain and WD repeat-containing protein 3">
    <location>
        <begin position="1"/>
        <end position="1802"/>
    </location>
</feature>
<feature type="repeat" description="WD 1">
    <location>
        <begin position="170"/>
        <end position="209"/>
    </location>
</feature>
<feature type="repeat" description="WD 2">
    <location>
        <begin position="213"/>
        <end position="251"/>
    </location>
</feature>
<feature type="repeat" description="WD 3">
    <location>
        <begin position="255"/>
        <end position="297"/>
    </location>
</feature>
<feature type="repeat" description="WD 4">
    <location>
        <begin position="307"/>
        <end position="347"/>
    </location>
</feature>
<feature type="repeat" description="WD 5">
    <location>
        <begin position="353"/>
        <end position="393"/>
    </location>
</feature>
<feature type="repeat" description="WD 6">
    <location>
        <begin position="400"/>
        <end position="452"/>
    </location>
</feature>
<feature type="repeat" description="WD 7">
    <location>
        <begin position="456"/>
        <end position="495"/>
    </location>
</feature>
<feature type="repeat" description="WD 8">
    <location>
        <begin position="502"/>
        <end position="542"/>
    </location>
</feature>
<feature type="domain" description="Bromo 1" evidence="2">
    <location>
        <begin position="1138"/>
        <end position="1245"/>
    </location>
</feature>
<feature type="domain" description="Bromo 2" evidence="2">
    <location>
        <begin position="1300"/>
        <end position="1430"/>
    </location>
</feature>
<feature type="region of interest" description="Disordered" evidence="3">
    <location>
        <begin position="768"/>
        <end position="910"/>
    </location>
</feature>
<feature type="region of interest" description="Disordered" evidence="3">
    <location>
        <begin position="1262"/>
        <end position="1292"/>
    </location>
</feature>
<feature type="region of interest" description="Disordered" evidence="3">
    <location>
        <begin position="1326"/>
        <end position="1361"/>
    </location>
</feature>
<feature type="region of interest" description="Disordered" evidence="3">
    <location>
        <begin position="1438"/>
        <end position="1500"/>
    </location>
</feature>
<feature type="region of interest" description="Disordered" evidence="3">
    <location>
        <begin position="1520"/>
        <end position="1725"/>
    </location>
</feature>
<feature type="compositionally biased region" description="Basic residues" evidence="3">
    <location>
        <begin position="785"/>
        <end position="795"/>
    </location>
</feature>
<feature type="compositionally biased region" description="Polar residues" evidence="3">
    <location>
        <begin position="796"/>
        <end position="817"/>
    </location>
</feature>
<feature type="compositionally biased region" description="Acidic residues" evidence="3">
    <location>
        <begin position="818"/>
        <end position="829"/>
    </location>
</feature>
<feature type="compositionally biased region" description="Low complexity" evidence="3">
    <location>
        <begin position="846"/>
        <end position="859"/>
    </location>
</feature>
<feature type="compositionally biased region" description="Basic and acidic residues" evidence="3">
    <location>
        <begin position="889"/>
        <end position="898"/>
    </location>
</feature>
<feature type="compositionally biased region" description="Basic residues" evidence="3">
    <location>
        <begin position="899"/>
        <end position="909"/>
    </location>
</feature>
<feature type="compositionally biased region" description="Acidic residues" evidence="3">
    <location>
        <begin position="1266"/>
        <end position="1278"/>
    </location>
</feature>
<feature type="compositionally biased region" description="Basic residues" evidence="3">
    <location>
        <begin position="1441"/>
        <end position="1453"/>
    </location>
</feature>
<feature type="compositionally biased region" description="Low complexity" evidence="3">
    <location>
        <begin position="1454"/>
        <end position="1468"/>
    </location>
</feature>
<feature type="compositionally biased region" description="Polar residues" evidence="3">
    <location>
        <begin position="1479"/>
        <end position="1499"/>
    </location>
</feature>
<feature type="compositionally biased region" description="Low complexity" evidence="3">
    <location>
        <begin position="1520"/>
        <end position="1533"/>
    </location>
</feature>
<feature type="compositionally biased region" description="Basic and acidic residues" evidence="3">
    <location>
        <begin position="1587"/>
        <end position="1600"/>
    </location>
</feature>
<feature type="compositionally biased region" description="Low complexity" evidence="3">
    <location>
        <begin position="1601"/>
        <end position="1626"/>
    </location>
</feature>
<feature type="compositionally biased region" description="Basic and acidic residues" evidence="3">
    <location>
        <begin position="1627"/>
        <end position="1643"/>
    </location>
</feature>
<feature type="compositionally biased region" description="Basic residues" evidence="3">
    <location>
        <begin position="1649"/>
        <end position="1666"/>
    </location>
</feature>
<feature type="compositionally biased region" description="Basic residues" evidence="3">
    <location>
        <begin position="1684"/>
        <end position="1697"/>
    </location>
</feature>
<feature type="modified residue" description="Phosphoserine" evidence="14">
    <location>
        <position position="693"/>
    </location>
</feature>
<feature type="modified residue" description="Phosphoserine" evidence="12">
    <location>
        <position position="703"/>
    </location>
</feature>
<feature type="modified residue" description="Phosphoserine" evidence="1">
    <location>
        <position position="885"/>
    </location>
</feature>
<feature type="modified residue" description="Phosphoserine" evidence="1">
    <location>
        <position position="886"/>
    </location>
</feature>
<feature type="modified residue" description="Phosphoserine" evidence="12">
    <location>
        <position position="1577"/>
    </location>
</feature>
<feature type="modified residue" description="Phosphoserine" evidence="13 14">
    <location>
        <position position="1579"/>
    </location>
</feature>
<feature type="modified residue" description="Phosphoserine" evidence="1">
    <location>
        <position position="1763"/>
    </location>
</feature>
<feature type="splice variant" id="VSP_024303" description="In isoform 3." evidence="9">
    <location>
        <begin position="1"/>
        <end position="404"/>
    </location>
</feature>
<feature type="splice variant" id="VSP_024304" description="In isoform 4." evidence="9">
    <location>
        <begin position="1"/>
        <end position="330"/>
    </location>
</feature>
<feature type="splice variant" id="VSP_024305" description="In isoform 2." evidence="9">
    <location>
        <begin position="1"/>
        <end position="171"/>
    </location>
</feature>
<feature type="splice variant" id="VSP_024306" description="In isoform 5." evidence="8">
    <original>GS</original>
    <variation>DL</variation>
    <location>
        <begin position="1385"/>
        <end position="1386"/>
    </location>
</feature>
<feature type="splice variant" id="VSP_024307" description="In isoform 5." evidence="8">
    <location>
        <begin position="1387"/>
        <end position="1802"/>
    </location>
</feature>
<feature type="sequence variant" id="VAR_031491" description="In dbSNP:rs3122407." evidence="4 5">
    <original>K</original>
    <variation>R</variation>
    <location>
        <position position="1288"/>
    </location>
</feature>
<feature type="sequence variant" id="VAR_036940" description="In XLID93; uncertain significance; dbSNP:rs137853272." evidence="6">
    <original>K</original>
    <variation>E</variation>
    <location>
        <position position="1596"/>
    </location>
</feature>
<organism>
    <name type="scientific">Homo sapiens</name>
    <name type="common">Human</name>
    <dbReference type="NCBI Taxonomy" id="9606"/>
    <lineage>
        <taxon>Eukaryota</taxon>
        <taxon>Metazoa</taxon>
        <taxon>Chordata</taxon>
        <taxon>Craniata</taxon>
        <taxon>Vertebrata</taxon>
        <taxon>Euteleostomi</taxon>
        <taxon>Mammalia</taxon>
        <taxon>Eutheria</taxon>
        <taxon>Euarchontoglires</taxon>
        <taxon>Primates</taxon>
        <taxon>Haplorrhini</taxon>
        <taxon>Catarrhini</taxon>
        <taxon>Hominidae</taxon>
        <taxon>Homo</taxon>
    </lineage>
</organism>
<keyword id="KW-0025">Alternative splicing</keyword>
<keyword id="KW-0103">Bromodomain</keyword>
<keyword id="KW-0160">Chromosomal rearrangement</keyword>
<keyword id="KW-0225">Disease variant</keyword>
<keyword id="KW-0991">Intellectual disability</keyword>
<keyword id="KW-0597">Phosphoprotein</keyword>
<keyword id="KW-1267">Proteomics identification</keyword>
<keyword id="KW-1185">Reference proteome</keyword>
<keyword id="KW-0677">Repeat</keyword>
<keyword id="KW-0853">WD repeat</keyword>
<gene>
    <name type="primary">BRWD3</name>
</gene>
<name>BRWD3_HUMAN</name>
<evidence type="ECO:0000250" key="1">
    <source>
        <dbReference type="UniProtKB" id="A2AHJ4"/>
    </source>
</evidence>
<evidence type="ECO:0000255" key="2">
    <source>
        <dbReference type="PROSITE-ProRule" id="PRU00035"/>
    </source>
</evidence>
<evidence type="ECO:0000256" key="3">
    <source>
        <dbReference type="SAM" id="MobiDB-lite"/>
    </source>
</evidence>
<evidence type="ECO:0000269" key="4">
    <source>
    </source>
</evidence>
<evidence type="ECO:0000269" key="5">
    <source>
    </source>
</evidence>
<evidence type="ECO:0000269" key="6">
    <source>
    </source>
</evidence>
<evidence type="ECO:0000269" key="7">
    <source>
    </source>
</evidence>
<evidence type="ECO:0000303" key="8">
    <source>
    </source>
</evidence>
<evidence type="ECO:0000303" key="9">
    <source>
    </source>
</evidence>
<evidence type="ECO:0000305" key="10"/>
<evidence type="ECO:0000305" key="11">
    <source>
    </source>
</evidence>
<evidence type="ECO:0007744" key="12">
    <source>
    </source>
</evidence>
<evidence type="ECO:0007744" key="13">
    <source>
    </source>
</evidence>
<evidence type="ECO:0007744" key="14">
    <source>
    </source>
</evidence>
<sequence>MAAAPTQIEAELYYLIARFLQSGPCNKSAQVLVQELEEHQLIPRRLDWEGKEHRRSFEDLVAANAHIPPDYLLKICERIGPLLDKEIPQSVPGVQTLLGVGRQSLLRDAKDCKSTLWNGSAFAALHRGRPPELPVNYVKPPNVVNITSARQLTGCSRFGHIFPSSAYQHIKMHKRILGHLSSVYCVAFDRSGRRIFTGSDDCLVKIWATDDGRLLATLRGHSAEISDMAVNYENTLIAAGSCDKVVRVWCLRTCAPVAVLQGHSASITSIQFCPSTKGTNRYLTSTGADGTICFWQWHVKTMKFRDRPVKFTERSRPGVQISCSSFSSGGMFITTGSTDHVIRIYYLGSEVPEKIAELESHTDKVVAVQFCNNGDSLRFVSGSRDGTARIWQYQQQEWKSIVLDMATKMTGNNLPSGEDKITKLKVTMVAWDRYDTTVITAVNNFLLKVWNSITGQLLHTLSGHDDEVFVLEAHPFDQRIILSAGHDGNIFIWDLDRGTKIRNYFNMIEGQGHGAVFDCKFSPDGNHFACTDSHGHLLLFGFGCSKYYEKIPDQMFFHTDYRPLIRDANNYVLDEQTQQAPHLMPPPFLVDVDGNPHPTKFQRLVPGRENCKDEQLIPQLGYVANGDGEVVEQVIGQQTNDQDESILDGIIRELQREQDLRLINEGDVPHLPVNRAYSVNGALRSPNMDISSSPNIRLRRHSSQIEGVRQMHNNAPRSQMATERDLMAWSRRVVVNELNNGVSRVQEECRTAKGDIEISLYTVEKKKKPSYTTQRNDYEPSCGRSLRRTQRKRQHTYQTRSNIEHNSQASCQNSGVQEDSDSSSEEDETVGTSDASVEDPVVEWQSESSSSDSSSEYSDWTADAGINLQPPKRQTRQTTRKICSSSDEENLKSLEERQKKPKQTRKKKGGLVSIAGEPNEEWFAPQWILDTIPRRSPFVPQMGDELIYFRQGHEAYVRAVRKSKIYSVNLQKQPWNKMDLREQEFVKIVGIKYEVGPPTLCCLKLAFLDPISGKMTGESFSIKYHDMPDVIDFLVLHQFYNEAKERNWQIGDRFRSIIDDAWWFGTVESQQPFQPEYPDSSFQCYSVHWDNNEREKMSPWDMEPIPEGTAFPDEVGAGVPVSQEELTALLYKPQEGEWGAHSRDEECERVIQGINHLLSLDFASPFAVPVDLSAYPLYCTVVAYPTDLNTIRRRLENRFYRRISALMWEVRYIEHNARTFNEPDSPIVKAAKIVTDVLLRFIGDQSCTDILDTYNKIKAEERNSTDAEEDTEIVDLDSDGPGTSSGRKVKCRGRRQSLKCNPDAWKKQCKELLSLIYEREDSEPFRQPADLLSYPGHQEQEGESSESVVPERQQDSSLSEDYQDVIDTPVDFSTVKETLEAGNYGSPLEFYKDVRQIFNNSKAYTSNKKSRIYSMMLRLSALFESHIKNIISEYKSAIQSQKRRRPRYRKRLRSSSSSLSSSGAPSPKGKQKQMKLQPKNDQNTSVSHARTSSPFSSPVSDAAEGLSLYLLDDEPDGPFSSSSFGGYSRSGNSHDPGKAKSFRNRVLPVKQDHSLDGPLTNGDGREPRTGIKRKLLSASEEDENMGGEDKEKKETKEKSHLSTSESGELGSSLSSESTCGSDSDSESTSRTDQDYVDGDHDYSKFIQTRPKRKLRKQHGNGKRNWKTRGTGGRGRWGRWGRWSRGGRGRGGRGRGSRGRGGGGTRGRGRGRGGRGASRGATRAKRARIADDEFDTMFSGRFSRLPRIKTRNQGRRTVLYNDDSDNDNFVSTEDPLNLGTSRSGRVRKMTEKARVSHLMGWNY</sequence>
<comment type="function">
    <text evidence="7">Plays a role in the regulation of cell morphology and cytoskeletal organization. Required in the control of cell shape.</text>
</comment>
<comment type="alternative products">
    <event type="alternative splicing"/>
    <isoform>
        <id>Q6RI45-1</id>
        <name>1</name>
        <name>BRWD3-A</name>
        <sequence type="displayed"/>
    </isoform>
    <isoform>
        <id>Q6RI45-2</id>
        <name>2</name>
        <name>BRWD3-B</name>
        <sequence type="described" ref="VSP_024305"/>
    </isoform>
    <isoform>
        <id>Q6RI45-3</id>
        <name>3</name>
        <name>BRWD3-C</name>
        <name>BRWD3-D</name>
        <name>BRWD3-E</name>
        <name>BRWD3-F</name>
        <name>BRWD3-G</name>
        <name>BRWD3-L</name>
        <name>BRWD3-M</name>
        <name>BRWD3-N</name>
        <name>BRWD3-O</name>
        <sequence type="described" ref="VSP_024303"/>
    </isoform>
    <isoform>
        <id>Q6RI45-4</id>
        <name>4</name>
        <name>BRWD3-H</name>
        <name>BRWD3-I</name>
        <name>BRWD3-K</name>
        <name>BRWD3-P</name>
        <sequence type="described" ref="VSP_024304"/>
    </isoform>
    <isoform>
        <id>Q6RI45-5</id>
        <name>5</name>
        <sequence type="described" ref="VSP_024306 VSP_024307"/>
    </isoform>
</comment>
<comment type="tissue specificity">
    <text evidence="5">Found in most adult tissues. Down-regulated in a majority of the B-CLL cases examined.</text>
</comment>
<comment type="developmental stage">
    <text>Expressed in fetal liver.</text>
</comment>
<comment type="disease">
    <text>A chromosomal aberration involving BRWD3 can be found in patients with B-cell chronic lymphocytic leukemia (B-CLL). Translocation t(X;11)(q21;q23) with ARHGAP20 does not result in fusion transcripts but disrupts both genes.</text>
</comment>
<comment type="disease" evidence="6">
    <disease id="DI-01967">
        <name>Intellectual developmental disorder, X-linked 93</name>
        <acronym>XLID93</acronym>
        <description>A disorder characterized by significantly below average general intellectual functioning associated with impairments in adaptive behavior and manifested during the developmental period. Intellectual deficiency is the only primary symptom of non-syndromic X-linked forms, while syndromic forms present with associated physical, neurological and/or psychiatric manifestations. XLID93 is associated with macrocephaly.</description>
        <dbReference type="MIM" id="300659"/>
    </disease>
    <text>The disease is caused by variants affecting the gene represented in this entry.</text>
</comment>
<comment type="caution">
    <text evidence="11">The translocation involving this gene was originally published as t(X;11)(q13;23), but BRWD3 is localized to Xq21 and not to Xq13.</text>
</comment>
<comment type="sequence caution" evidence="10">
    <conflict type="erroneous initiation">
        <sequence resource="EMBL-CDS" id="BAC04641"/>
    </conflict>
    <text>Truncated N-terminus.</text>
</comment>
<comment type="online information" name="Atlas of Genetics and Cytogenetics in Oncology and Haematology">
    <link uri="https://atlasgeneticsoncology.org/gene/42978/BRWD3"/>
</comment>
<protein>
    <recommendedName>
        <fullName>Bromodomain and WD repeat-containing protein 3</fullName>
    </recommendedName>
</protein>
<proteinExistence type="evidence at protein level"/>
<reference key="1">
    <citation type="journal article" date="2005" name="Genes Chromosomes Cancer">
        <title>Translocation t(X;11)(q13;q23) in B-cell chronic lymphocytic leukemia disrupts two novel genes.</title>
        <authorList>
            <person name="Kalla C."/>
            <person name="Nentwich H."/>
            <person name="Schlotter M."/>
            <person name="Mertens D."/>
            <person name="Wildenberger K."/>
            <person name="Doehner H."/>
            <person name="Stilgenbauer S."/>
            <person name="Lichter P."/>
        </authorList>
    </citation>
    <scope>NUCLEOTIDE SEQUENCE [MRNA] (ISOFORMS 1; 2; 3 AND 4)</scope>
    <scope>TISSUE SPECIFICITY</scope>
    <scope>CHROMOSOMAL TRANSLOCATION WITH ARHGAP20</scope>
    <scope>VARIANT ARG-1288</scope>
</reference>
<reference key="2">
    <citation type="journal article" date="2005" name="Nature">
        <title>The DNA sequence of the human X chromosome.</title>
        <authorList>
            <person name="Ross M.T."/>
            <person name="Grafham D.V."/>
            <person name="Coffey A.J."/>
            <person name="Scherer S."/>
            <person name="McLay K."/>
            <person name="Muzny D."/>
            <person name="Platzer M."/>
            <person name="Howell G.R."/>
            <person name="Burrows C."/>
            <person name="Bird C.P."/>
            <person name="Frankish A."/>
            <person name="Lovell F.L."/>
            <person name="Howe K.L."/>
            <person name="Ashurst J.L."/>
            <person name="Fulton R.S."/>
            <person name="Sudbrak R."/>
            <person name="Wen G."/>
            <person name="Jones M.C."/>
            <person name="Hurles M.E."/>
            <person name="Andrews T.D."/>
            <person name="Scott C.E."/>
            <person name="Searle S."/>
            <person name="Ramser J."/>
            <person name="Whittaker A."/>
            <person name="Deadman R."/>
            <person name="Carter N.P."/>
            <person name="Hunt S.E."/>
            <person name="Chen R."/>
            <person name="Cree A."/>
            <person name="Gunaratne P."/>
            <person name="Havlak P."/>
            <person name="Hodgson A."/>
            <person name="Metzker M.L."/>
            <person name="Richards S."/>
            <person name="Scott G."/>
            <person name="Steffen D."/>
            <person name="Sodergren E."/>
            <person name="Wheeler D.A."/>
            <person name="Worley K.C."/>
            <person name="Ainscough R."/>
            <person name="Ambrose K.D."/>
            <person name="Ansari-Lari M.A."/>
            <person name="Aradhya S."/>
            <person name="Ashwell R.I."/>
            <person name="Babbage A.K."/>
            <person name="Bagguley C.L."/>
            <person name="Ballabio A."/>
            <person name="Banerjee R."/>
            <person name="Barker G.E."/>
            <person name="Barlow K.F."/>
            <person name="Barrett I.P."/>
            <person name="Bates K.N."/>
            <person name="Beare D.M."/>
            <person name="Beasley H."/>
            <person name="Beasley O."/>
            <person name="Beck A."/>
            <person name="Bethel G."/>
            <person name="Blechschmidt K."/>
            <person name="Brady N."/>
            <person name="Bray-Allen S."/>
            <person name="Bridgeman A.M."/>
            <person name="Brown A.J."/>
            <person name="Brown M.J."/>
            <person name="Bonnin D."/>
            <person name="Bruford E.A."/>
            <person name="Buhay C."/>
            <person name="Burch P."/>
            <person name="Burford D."/>
            <person name="Burgess J."/>
            <person name="Burrill W."/>
            <person name="Burton J."/>
            <person name="Bye J.M."/>
            <person name="Carder C."/>
            <person name="Carrel L."/>
            <person name="Chako J."/>
            <person name="Chapman J.C."/>
            <person name="Chavez D."/>
            <person name="Chen E."/>
            <person name="Chen G."/>
            <person name="Chen Y."/>
            <person name="Chen Z."/>
            <person name="Chinault C."/>
            <person name="Ciccodicola A."/>
            <person name="Clark S.Y."/>
            <person name="Clarke G."/>
            <person name="Clee C.M."/>
            <person name="Clegg S."/>
            <person name="Clerc-Blankenburg K."/>
            <person name="Clifford K."/>
            <person name="Cobley V."/>
            <person name="Cole C.G."/>
            <person name="Conquer J.S."/>
            <person name="Corby N."/>
            <person name="Connor R.E."/>
            <person name="David R."/>
            <person name="Davies J."/>
            <person name="Davis C."/>
            <person name="Davis J."/>
            <person name="Delgado O."/>
            <person name="Deshazo D."/>
            <person name="Dhami P."/>
            <person name="Ding Y."/>
            <person name="Dinh H."/>
            <person name="Dodsworth S."/>
            <person name="Draper H."/>
            <person name="Dugan-Rocha S."/>
            <person name="Dunham A."/>
            <person name="Dunn M."/>
            <person name="Durbin K.J."/>
            <person name="Dutta I."/>
            <person name="Eades T."/>
            <person name="Ellwood M."/>
            <person name="Emery-Cohen A."/>
            <person name="Errington H."/>
            <person name="Evans K.L."/>
            <person name="Faulkner L."/>
            <person name="Francis F."/>
            <person name="Frankland J."/>
            <person name="Fraser A.E."/>
            <person name="Galgoczy P."/>
            <person name="Gilbert J."/>
            <person name="Gill R."/>
            <person name="Gloeckner G."/>
            <person name="Gregory S.G."/>
            <person name="Gribble S."/>
            <person name="Griffiths C."/>
            <person name="Grocock R."/>
            <person name="Gu Y."/>
            <person name="Gwilliam R."/>
            <person name="Hamilton C."/>
            <person name="Hart E.A."/>
            <person name="Hawes A."/>
            <person name="Heath P.D."/>
            <person name="Heitmann K."/>
            <person name="Hennig S."/>
            <person name="Hernandez J."/>
            <person name="Hinzmann B."/>
            <person name="Ho S."/>
            <person name="Hoffs M."/>
            <person name="Howden P.J."/>
            <person name="Huckle E.J."/>
            <person name="Hume J."/>
            <person name="Hunt P.J."/>
            <person name="Hunt A.R."/>
            <person name="Isherwood J."/>
            <person name="Jacob L."/>
            <person name="Johnson D."/>
            <person name="Jones S."/>
            <person name="de Jong P.J."/>
            <person name="Joseph S.S."/>
            <person name="Keenan S."/>
            <person name="Kelly S."/>
            <person name="Kershaw J.K."/>
            <person name="Khan Z."/>
            <person name="Kioschis P."/>
            <person name="Klages S."/>
            <person name="Knights A.J."/>
            <person name="Kosiura A."/>
            <person name="Kovar-Smith C."/>
            <person name="Laird G.K."/>
            <person name="Langford C."/>
            <person name="Lawlor S."/>
            <person name="Leversha M."/>
            <person name="Lewis L."/>
            <person name="Liu W."/>
            <person name="Lloyd C."/>
            <person name="Lloyd D.M."/>
            <person name="Loulseged H."/>
            <person name="Loveland J.E."/>
            <person name="Lovell J.D."/>
            <person name="Lozado R."/>
            <person name="Lu J."/>
            <person name="Lyne R."/>
            <person name="Ma J."/>
            <person name="Maheshwari M."/>
            <person name="Matthews L.H."/>
            <person name="McDowall J."/>
            <person name="McLaren S."/>
            <person name="McMurray A."/>
            <person name="Meidl P."/>
            <person name="Meitinger T."/>
            <person name="Milne S."/>
            <person name="Miner G."/>
            <person name="Mistry S.L."/>
            <person name="Morgan M."/>
            <person name="Morris S."/>
            <person name="Mueller I."/>
            <person name="Mullikin J.C."/>
            <person name="Nguyen N."/>
            <person name="Nordsiek G."/>
            <person name="Nyakatura G."/>
            <person name="O'dell C.N."/>
            <person name="Okwuonu G."/>
            <person name="Palmer S."/>
            <person name="Pandian R."/>
            <person name="Parker D."/>
            <person name="Parrish J."/>
            <person name="Pasternak S."/>
            <person name="Patel D."/>
            <person name="Pearce A.V."/>
            <person name="Pearson D.M."/>
            <person name="Pelan S.E."/>
            <person name="Perez L."/>
            <person name="Porter K.M."/>
            <person name="Ramsey Y."/>
            <person name="Reichwald K."/>
            <person name="Rhodes S."/>
            <person name="Ridler K.A."/>
            <person name="Schlessinger D."/>
            <person name="Schueler M.G."/>
            <person name="Sehra H.K."/>
            <person name="Shaw-Smith C."/>
            <person name="Shen H."/>
            <person name="Sheridan E.M."/>
            <person name="Shownkeen R."/>
            <person name="Skuce C.D."/>
            <person name="Smith M.L."/>
            <person name="Sotheran E.C."/>
            <person name="Steingruber H.E."/>
            <person name="Steward C.A."/>
            <person name="Storey R."/>
            <person name="Swann R.M."/>
            <person name="Swarbreck D."/>
            <person name="Tabor P.E."/>
            <person name="Taudien S."/>
            <person name="Taylor T."/>
            <person name="Teague B."/>
            <person name="Thomas K."/>
            <person name="Thorpe A."/>
            <person name="Timms K."/>
            <person name="Tracey A."/>
            <person name="Trevanion S."/>
            <person name="Tromans A.C."/>
            <person name="d'Urso M."/>
            <person name="Verduzco D."/>
            <person name="Villasana D."/>
            <person name="Waldron L."/>
            <person name="Wall M."/>
            <person name="Wang Q."/>
            <person name="Warren J."/>
            <person name="Warry G.L."/>
            <person name="Wei X."/>
            <person name="West A."/>
            <person name="Whitehead S.L."/>
            <person name="Whiteley M.N."/>
            <person name="Wilkinson J.E."/>
            <person name="Willey D.L."/>
            <person name="Williams G."/>
            <person name="Williams L."/>
            <person name="Williamson A."/>
            <person name="Williamson H."/>
            <person name="Wilming L."/>
            <person name="Woodmansey R.L."/>
            <person name="Wray P.W."/>
            <person name="Yen J."/>
            <person name="Zhang J."/>
            <person name="Zhou J."/>
            <person name="Zoghbi H."/>
            <person name="Zorilla S."/>
            <person name="Buck D."/>
            <person name="Reinhardt R."/>
            <person name="Poustka A."/>
            <person name="Rosenthal A."/>
            <person name="Lehrach H."/>
            <person name="Meindl A."/>
            <person name="Minx P.J."/>
            <person name="Hillier L.W."/>
            <person name="Willard H.F."/>
            <person name="Wilson R.K."/>
            <person name="Waterston R.H."/>
            <person name="Rice C.M."/>
            <person name="Vaudin M."/>
            <person name="Coulson A."/>
            <person name="Nelson D.L."/>
            <person name="Weinstock G."/>
            <person name="Sulston J.E."/>
            <person name="Durbin R.M."/>
            <person name="Hubbard T."/>
            <person name="Gibbs R.A."/>
            <person name="Beck S."/>
            <person name="Rogers J."/>
            <person name="Bentley D.R."/>
        </authorList>
    </citation>
    <scope>NUCLEOTIDE SEQUENCE [LARGE SCALE GENOMIC DNA]</scope>
</reference>
<reference key="3">
    <citation type="journal article" date="2004" name="Genome Res.">
        <title>The status, quality, and expansion of the NIH full-length cDNA project: the Mammalian Gene Collection (MGC).</title>
        <authorList>
            <consortium name="The MGC Project Team"/>
        </authorList>
    </citation>
    <scope>NUCLEOTIDE SEQUENCE [LARGE SCALE MRNA] OF 1-768 (ISOFORM 1)</scope>
    <source>
        <tissue>Lymph</tissue>
    </source>
</reference>
<reference key="4">
    <citation type="journal article" date="2004" name="Nat. Genet.">
        <title>Complete sequencing and characterization of 21,243 full-length human cDNAs.</title>
        <authorList>
            <person name="Ota T."/>
            <person name="Suzuki Y."/>
            <person name="Nishikawa T."/>
            <person name="Otsuki T."/>
            <person name="Sugiyama T."/>
            <person name="Irie R."/>
            <person name="Wakamatsu A."/>
            <person name="Hayashi K."/>
            <person name="Sato H."/>
            <person name="Nagai K."/>
            <person name="Kimura K."/>
            <person name="Makita H."/>
            <person name="Sekine M."/>
            <person name="Obayashi M."/>
            <person name="Nishi T."/>
            <person name="Shibahara T."/>
            <person name="Tanaka T."/>
            <person name="Ishii S."/>
            <person name="Yamamoto J."/>
            <person name="Saito K."/>
            <person name="Kawai Y."/>
            <person name="Isono Y."/>
            <person name="Nakamura Y."/>
            <person name="Nagahari K."/>
            <person name="Murakami K."/>
            <person name="Yasuda T."/>
            <person name="Iwayanagi T."/>
            <person name="Wagatsuma M."/>
            <person name="Shiratori A."/>
            <person name="Sudo H."/>
            <person name="Hosoiri T."/>
            <person name="Kaku Y."/>
            <person name="Kodaira H."/>
            <person name="Kondo H."/>
            <person name="Sugawara M."/>
            <person name="Takahashi M."/>
            <person name="Kanda K."/>
            <person name="Yokoi T."/>
            <person name="Furuya T."/>
            <person name="Kikkawa E."/>
            <person name="Omura Y."/>
            <person name="Abe K."/>
            <person name="Kamihara K."/>
            <person name="Katsuta N."/>
            <person name="Sato K."/>
            <person name="Tanikawa M."/>
            <person name="Yamazaki M."/>
            <person name="Ninomiya K."/>
            <person name="Ishibashi T."/>
            <person name="Yamashita H."/>
            <person name="Murakawa K."/>
            <person name="Fujimori K."/>
            <person name="Tanai H."/>
            <person name="Kimata M."/>
            <person name="Watanabe M."/>
            <person name="Hiraoka S."/>
            <person name="Chiba Y."/>
            <person name="Ishida S."/>
            <person name="Ono Y."/>
            <person name="Takiguchi S."/>
            <person name="Watanabe S."/>
            <person name="Yosida M."/>
            <person name="Hotuta T."/>
            <person name="Kusano J."/>
            <person name="Kanehori K."/>
            <person name="Takahashi-Fujii A."/>
            <person name="Hara H."/>
            <person name="Tanase T.-O."/>
            <person name="Nomura Y."/>
            <person name="Togiya S."/>
            <person name="Komai F."/>
            <person name="Hara R."/>
            <person name="Takeuchi K."/>
            <person name="Arita M."/>
            <person name="Imose N."/>
            <person name="Musashino K."/>
            <person name="Yuuki H."/>
            <person name="Oshima A."/>
            <person name="Sasaki N."/>
            <person name="Aotsuka S."/>
            <person name="Yoshikawa Y."/>
            <person name="Matsunawa H."/>
            <person name="Ichihara T."/>
            <person name="Shiohata N."/>
            <person name="Sano S."/>
            <person name="Moriya S."/>
            <person name="Momiyama H."/>
            <person name="Satoh N."/>
            <person name="Takami S."/>
            <person name="Terashima Y."/>
            <person name="Suzuki O."/>
            <person name="Nakagawa S."/>
            <person name="Senoh A."/>
            <person name="Mizoguchi H."/>
            <person name="Goto Y."/>
            <person name="Shimizu F."/>
            <person name="Wakebe H."/>
            <person name="Hishigaki H."/>
            <person name="Watanabe T."/>
            <person name="Sugiyama A."/>
            <person name="Takemoto M."/>
            <person name="Kawakami B."/>
            <person name="Yamazaki M."/>
            <person name="Watanabe K."/>
            <person name="Kumagai A."/>
            <person name="Itakura S."/>
            <person name="Fukuzumi Y."/>
            <person name="Fujimori Y."/>
            <person name="Komiyama M."/>
            <person name="Tashiro H."/>
            <person name="Tanigami A."/>
            <person name="Fujiwara T."/>
            <person name="Ono T."/>
            <person name="Yamada K."/>
            <person name="Fujii Y."/>
            <person name="Ozaki K."/>
            <person name="Hirao M."/>
            <person name="Ohmori Y."/>
            <person name="Kawabata A."/>
            <person name="Hikiji T."/>
            <person name="Kobatake N."/>
            <person name="Inagaki H."/>
            <person name="Ikema Y."/>
            <person name="Okamoto S."/>
            <person name="Okitani R."/>
            <person name="Kawakami T."/>
            <person name="Noguchi S."/>
            <person name="Itoh T."/>
            <person name="Shigeta K."/>
            <person name="Senba T."/>
            <person name="Matsumura K."/>
            <person name="Nakajima Y."/>
            <person name="Mizuno T."/>
            <person name="Morinaga M."/>
            <person name="Sasaki M."/>
            <person name="Togashi T."/>
            <person name="Oyama M."/>
            <person name="Hata H."/>
            <person name="Watanabe M."/>
            <person name="Komatsu T."/>
            <person name="Mizushima-Sugano J."/>
            <person name="Satoh T."/>
            <person name="Shirai Y."/>
            <person name="Takahashi Y."/>
            <person name="Nakagawa K."/>
            <person name="Okumura K."/>
            <person name="Nagase T."/>
            <person name="Nomura N."/>
            <person name="Kikuchi H."/>
            <person name="Masuho Y."/>
            <person name="Yamashita R."/>
            <person name="Nakai K."/>
            <person name="Yada T."/>
            <person name="Nakamura Y."/>
            <person name="Ohara O."/>
            <person name="Isogai T."/>
            <person name="Sugano S."/>
        </authorList>
    </citation>
    <scope>NUCLEOTIDE SEQUENCE [LARGE SCALE MRNA] OF 623-1802 (ISOFORM 5)</scope>
    <scope>VARIANT ARG-1288</scope>
</reference>
<reference key="5">
    <citation type="journal article" date="2010" name="Sci. Signal.">
        <title>Quantitative phosphoproteomics reveals widespread full phosphorylation site occupancy during mitosis.</title>
        <authorList>
            <person name="Olsen J.V."/>
            <person name="Vermeulen M."/>
            <person name="Santamaria A."/>
            <person name="Kumar C."/>
            <person name="Miller M.L."/>
            <person name="Jensen L.J."/>
            <person name="Gnad F."/>
            <person name="Cox J."/>
            <person name="Jensen T.S."/>
            <person name="Nigg E.A."/>
            <person name="Brunak S."/>
            <person name="Mann M."/>
        </authorList>
    </citation>
    <scope>PHOSPHORYLATION [LARGE SCALE ANALYSIS] AT SER-703 AND SER-1577</scope>
    <scope>IDENTIFICATION BY MASS SPECTROMETRY [LARGE SCALE ANALYSIS]</scope>
    <source>
        <tissue>Cervix carcinoma</tissue>
    </source>
</reference>
<reference key="6">
    <citation type="journal article" date="2011" name="BMC Biol.">
        <title>Identification and characterization of a set of conserved and new regulators of cytoskeletal organisation, cell morphology and migration.</title>
        <authorList>
            <person name="Bai S.W."/>
            <person name="Herrera-Abreu M.T."/>
            <person name="Rohn J.L."/>
            <person name="Racine V."/>
            <person name="Tajadura V."/>
            <person name="Suryavanshi N."/>
            <person name="Bechtel S."/>
            <person name="Wiemann S."/>
            <person name="Baum B."/>
            <person name="Ridley A.J."/>
        </authorList>
    </citation>
    <scope>FUNCTION</scope>
</reference>
<reference key="7">
    <citation type="journal article" date="2011" name="Sci. Signal.">
        <title>System-wide temporal characterization of the proteome and phosphoproteome of human embryonic stem cell differentiation.</title>
        <authorList>
            <person name="Rigbolt K.T."/>
            <person name="Prokhorova T.A."/>
            <person name="Akimov V."/>
            <person name="Henningsen J."/>
            <person name="Johansen P.T."/>
            <person name="Kratchmarova I."/>
            <person name="Kassem M."/>
            <person name="Mann M."/>
            <person name="Olsen J.V."/>
            <person name="Blagoev B."/>
        </authorList>
    </citation>
    <scope>PHOSPHORYLATION [LARGE SCALE ANALYSIS] AT SER-1579</scope>
    <scope>IDENTIFICATION BY MASS SPECTROMETRY [LARGE SCALE ANALYSIS]</scope>
</reference>
<reference key="8">
    <citation type="journal article" date="2013" name="J. Proteome Res.">
        <title>Toward a comprehensive characterization of a human cancer cell phosphoproteome.</title>
        <authorList>
            <person name="Zhou H."/>
            <person name="Di Palma S."/>
            <person name="Preisinger C."/>
            <person name="Peng M."/>
            <person name="Polat A.N."/>
            <person name="Heck A.J."/>
            <person name="Mohammed S."/>
        </authorList>
    </citation>
    <scope>PHOSPHORYLATION [LARGE SCALE ANALYSIS] AT SER-693 AND SER-1579</scope>
    <scope>IDENTIFICATION BY MASS SPECTROMETRY [LARGE SCALE ANALYSIS]</scope>
    <source>
        <tissue>Cervix carcinoma</tissue>
        <tissue>Erythroleukemia</tissue>
    </source>
</reference>
<reference key="9">
    <citation type="journal article" date="2007" name="Am. J. Hum. Genet.">
        <title>Mutations in the BRWD3 gene cause X-linked mental retardation associated with macrocephaly.</title>
        <authorList>
            <person name="Field M."/>
            <person name="Tarpey P.S."/>
            <person name="Smith R."/>
            <person name="Edkins S."/>
            <person name="O'Meara S."/>
            <person name="Stevens C."/>
            <person name="Tofts C."/>
            <person name="Teague J."/>
            <person name="Butler A."/>
            <person name="Dicks E."/>
            <person name="Barthorpe S."/>
            <person name="Buck G."/>
            <person name="Cole J."/>
            <person name="Gray K."/>
            <person name="Halliday K."/>
            <person name="Hills K."/>
            <person name="Jenkinson A."/>
            <person name="Jones D."/>
            <person name="Menzies A."/>
            <person name="Mironenko T."/>
            <person name="Perry J."/>
            <person name="Raine K."/>
            <person name="Richardson D."/>
            <person name="Shepherd R."/>
            <person name="Small A."/>
            <person name="Varian J."/>
            <person name="West S."/>
            <person name="Widaa S."/>
            <person name="Mallya U."/>
            <person name="Wooster R."/>
            <person name="Moon J."/>
            <person name="Luo Y."/>
            <person name="Hughes H."/>
            <person name="Shaw M."/>
            <person name="Friend K.L."/>
            <person name="Corbett M."/>
            <person name="Turner G."/>
            <person name="Partington M."/>
            <person name="Mulley J."/>
            <person name="Bobrow M."/>
            <person name="Schwartz C."/>
            <person name="Stevenson R."/>
            <person name="Gecz J."/>
            <person name="Stratton M.R."/>
            <person name="Futreal P.A."/>
            <person name="Raymond F.L."/>
        </authorList>
    </citation>
    <scope>VARIANT XLID93 GLU-1596</scope>
</reference>